<gene>
    <name evidence="1" type="primary">yaaA</name>
    <name type="ordered locus">ECIAI1_0006</name>
</gene>
<reference key="1">
    <citation type="journal article" date="2009" name="PLoS Genet.">
        <title>Organised genome dynamics in the Escherichia coli species results in highly diverse adaptive paths.</title>
        <authorList>
            <person name="Touchon M."/>
            <person name="Hoede C."/>
            <person name="Tenaillon O."/>
            <person name="Barbe V."/>
            <person name="Baeriswyl S."/>
            <person name="Bidet P."/>
            <person name="Bingen E."/>
            <person name="Bonacorsi S."/>
            <person name="Bouchier C."/>
            <person name="Bouvet O."/>
            <person name="Calteau A."/>
            <person name="Chiapello H."/>
            <person name="Clermont O."/>
            <person name="Cruveiller S."/>
            <person name="Danchin A."/>
            <person name="Diard M."/>
            <person name="Dossat C."/>
            <person name="Karoui M.E."/>
            <person name="Frapy E."/>
            <person name="Garry L."/>
            <person name="Ghigo J.M."/>
            <person name="Gilles A.M."/>
            <person name="Johnson J."/>
            <person name="Le Bouguenec C."/>
            <person name="Lescat M."/>
            <person name="Mangenot S."/>
            <person name="Martinez-Jehanne V."/>
            <person name="Matic I."/>
            <person name="Nassif X."/>
            <person name="Oztas S."/>
            <person name="Petit M.A."/>
            <person name="Pichon C."/>
            <person name="Rouy Z."/>
            <person name="Ruf C.S."/>
            <person name="Schneider D."/>
            <person name="Tourret J."/>
            <person name="Vacherie B."/>
            <person name="Vallenet D."/>
            <person name="Medigue C."/>
            <person name="Rocha E.P.C."/>
            <person name="Denamur E."/>
        </authorList>
    </citation>
    <scope>NUCLEOTIDE SEQUENCE [LARGE SCALE GENOMIC DNA]</scope>
    <source>
        <strain>IAI1</strain>
    </source>
</reference>
<feature type="chain" id="PRO_1000131114" description="UPF0246 protein YaaA">
    <location>
        <begin position="1"/>
        <end position="258"/>
    </location>
</feature>
<accession>B7M0A3</accession>
<evidence type="ECO:0000255" key="1">
    <source>
        <dbReference type="HAMAP-Rule" id="MF_00652"/>
    </source>
</evidence>
<protein>
    <recommendedName>
        <fullName evidence="1">UPF0246 protein YaaA</fullName>
    </recommendedName>
</protein>
<proteinExistence type="inferred from homology"/>
<dbReference type="EMBL" id="CU928160">
    <property type="protein sequence ID" value="CAQ96897.1"/>
    <property type="molecule type" value="Genomic_DNA"/>
</dbReference>
<dbReference type="RefSeq" id="WP_000906184.1">
    <property type="nucleotide sequence ID" value="NC_011741.1"/>
</dbReference>
<dbReference type="SMR" id="B7M0A3"/>
<dbReference type="KEGG" id="ecr:ECIAI1_0006"/>
<dbReference type="HOGENOM" id="CLU_061989_0_0_6"/>
<dbReference type="GO" id="GO:0005829">
    <property type="term" value="C:cytosol"/>
    <property type="evidence" value="ECO:0007669"/>
    <property type="project" value="TreeGrafter"/>
</dbReference>
<dbReference type="GO" id="GO:0033194">
    <property type="term" value="P:response to hydroperoxide"/>
    <property type="evidence" value="ECO:0007669"/>
    <property type="project" value="TreeGrafter"/>
</dbReference>
<dbReference type="HAMAP" id="MF_00652">
    <property type="entry name" value="UPF0246"/>
    <property type="match status" value="1"/>
</dbReference>
<dbReference type="InterPro" id="IPR005583">
    <property type="entry name" value="YaaA"/>
</dbReference>
<dbReference type="NCBIfam" id="NF002541">
    <property type="entry name" value="PRK02101.1-1"/>
    <property type="match status" value="1"/>
</dbReference>
<dbReference type="NCBIfam" id="NF002542">
    <property type="entry name" value="PRK02101.1-3"/>
    <property type="match status" value="1"/>
</dbReference>
<dbReference type="PANTHER" id="PTHR30283:SF4">
    <property type="entry name" value="PEROXIDE STRESS RESISTANCE PROTEIN YAAA"/>
    <property type="match status" value="1"/>
</dbReference>
<dbReference type="PANTHER" id="PTHR30283">
    <property type="entry name" value="PEROXIDE STRESS RESPONSE PROTEIN YAAA"/>
    <property type="match status" value="1"/>
</dbReference>
<dbReference type="Pfam" id="PF03883">
    <property type="entry name" value="H2O2_YaaD"/>
    <property type="match status" value="1"/>
</dbReference>
<organism>
    <name type="scientific">Escherichia coli O8 (strain IAI1)</name>
    <dbReference type="NCBI Taxonomy" id="585034"/>
    <lineage>
        <taxon>Bacteria</taxon>
        <taxon>Pseudomonadati</taxon>
        <taxon>Pseudomonadota</taxon>
        <taxon>Gammaproteobacteria</taxon>
        <taxon>Enterobacterales</taxon>
        <taxon>Enterobacteriaceae</taxon>
        <taxon>Escherichia</taxon>
    </lineage>
</organism>
<sequence>MLILISPAKTLDYQSPLTTMRYTLPELLDNSQQLIHEARKLTPPQISTLMRISDKLAGINAARFHDWQPDFTPENARQAILAFKGDVYTGLQAETFSEDDFDFAQQHLRMLSGLYGVLRPLDLMQPYRLEMGIRLENARGKDLYQFWGDIITNKLNEALAAQGDNVVINLASDEYFKSVKPKKLNAEIIKPVFLDEKNGKFKIISFYAKKARGLMSRFIIENRLTKPEQLTGFNSEGYFFDEDSSSNGELVFKRYEQR</sequence>
<comment type="similarity">
    <text evidence="1">Belongs to the UPF0246 family.</text>
</comment>
<name>YAAA_ECO8A</name>